<evidence type="ECO:0000250" key="1">
    <source>
        <dbReference type="UniProtKB" id="Q0V6Q1"/>
    </source>
</evidence>
<evidence type="ECO:0000250" key="2">
    <source>
        <dbReference type="UniProtKB" id="Q4WZB3"/>
    </source>
</evidence>
<evidence type="ECO:0000250" key="3">
    <source>
        <dbReference type="UniProtKB" id="Q93NG6"/>
    </source>
</evidence>
<evidence type="ECO:0000269" key="4">
    <source>
    </source>
</evidence>
<evidence type="ECO:0000303" key="5">
    <source>
    </source>
</evidence>
<evidence type="ECO:0000305" key="6"/>
<evidence type="ECO:0000305" key="7">
    <source>
    </source>
</evidence>
<dbReference type="EC" id="3.7.1.-" evidence="7"/>
<dbReference type="EMBL" id="MT586757">
    <property type="protein sequence ID" value="QOG08947.1"/>
    <property type="molecule type" value="Genomic_DNA"/>
</dbReference>
<dbReference type="SMR" id="A0A7L8UVC6"/>
<dbReference type="ESTHER" id="aspfv-ffse">
    <property type="family name" value="Duf_1100-S"/>
</dbReference>
<dbReference type="GO" id="GO:0016787">
    <property type="term" value="F:hydrolase activity"/>
    <property type="evidence" value="ECO:0007669"/>
    <property type="project" value="UniProtKB-KW"/>
</dbReference>
<dbReference type="Gene3D" id="1.20.1440.110">
    <property type="entry name" value="acylaminoacyl peptidase"/>
    <property type="match status" value="1"/>
</dbReference>
<dbReference type="Gene3D" id="3.40.50.1820">
    <property type="entry name" value="alpha/beta hydrolase"/>
    <property type="match status" value="1"/>
</dbReference>
<dbReference type="InterPro" id="IPR000073">
    <property type="entry name" value="AB_hydrolase_1"/>
</dbReference>
<dbReference type="InterPro" id="IPR029058">
    <property type="entry name" value="AB_hydrolase_fold"/>
</dbReference>
<dbReference type="InterPro" id="IPR050261">
    <property type="entry name" value="FrsA_esterase"/>
</dbReference>
<dbReference type="PANTHER" id="PTHR22946:SF13">
    <property type="entry name" value="ALPHA_BETA HYDROLASE PSOB"/>
    <property type="match status" value="1"/>
</dbReference>
<dbReference type="PANTHER" id="PTHR22946">
    <property type="entry name" value="DIENELACTONE HYDROLASE DOMAIN-CONTAINING PROTEIN-RELATED"/>
    <property type="match status" value="1"/>
</dbReference>
<dbReference type="Pfam" id="PF12697">
    <property type="entry name" value="Abhydrolase_6"/>
    <property type="match status" value="1"/>
</dbReference>
<dbReference type="SUPFAM" id="SSF53474">
    <property type="entry name" value="alpha/beta-Hydrolases"/>
    <property type="match status" value="1"/>
</dbReference>
<sequence length="450" mass="49701">MTGPPGNPAFATIHEFFPGNTFYNFECLRILSTAPYGGCDPAEFLTAIAAIKPSDPETWATAWSHAASQAERIAEDALARGDTLAARDAFLRASSYTRASGYMRINGPTLDRHDPRALPVARKTQALFRKALPFLDCDARIVDIPYRPTQYSKPVSLPGYVYIPSPQNRLPDGKIPVLLNTGGADSVQEELYYIHPQAGHARGYAVITFEGPGQGIVLREKGLYMRPDWEVVTGQVLDWLEGYAATLQQEEGLTLDLSRIAVVGASMGGYYALRAASDPRIKACLSIDPFYDMWDFGTRHISGLFMAAWTGGWVSDATIDRVIGAGMYLNFQLRWEVGVTTAFWGIESPSRILREMKRYSLQGGFLARVQCPVFVSGAGKSLYFDTEEHTMRVFGDLKHLGERRRTLWMPSRPEEGGLQAKIGAFGLVNTKAFGFLDGVFGVKRVLEAET</sequence>
<protein>
    <recommendedName>
        <fullName evidence="5">Hydrolase ffsE</fullName>
        <ecNumber evidence="7">3.7.1.-</ecNumber>
    </recommendedName>
    <alternativeName>
        <fullName evidence="5">Cytochalasans biosynthesis cluster protein ffsE</fullName>
    </alternativeName>
</protein>
<accession>A0A7L8UVC6</accession>
<reference key="1">
    <citation type="journal article" date="2020" name="J. Antibiot.">
        <title>Discovery and characterization of a cytochalasan biosynthetic cluster from the marine-derived fungus Aspergillus flavipes CNL-338.</title>
        <authorList>
            <person name="Heard S.C."/>
            <person name="Wu G."/>
            <person name="Winter J.M."/>
        </authorList>
    </citation>
    <scope>NUCLEOTIDE SEQUENCE [GENOMIC DNA]</scope>
    <scope>FUNCTION</scope>
    <scope>PATHWAY</scope>
    <source>
        <strain>CNL-338</strain>
    </source>
</reference>
<feature type="chain" id="PRO_0000454527" description="Hydrolase ffsE">
    <location>
        <begin position="1"/>
        <end position="450"/>
    </location>
</feature>
<feature type="active site" description="Nucleophile" evidence="2">
    <location>
        <position position="266"/>
    </location>
</feature>
<organism>
    <name type="scientific">Aspergillus flavipes</name>
    <dbReference type="NCBI Taxonomy" id="41900"/>
    <lineage>
        <taxon>Eukaryota</taxon>
        <taxon>Fungi</taxon>
        <taxon>Dikarya</taxon>
        <taxon>Ascomycota</taxon>
        <taxon>Pezizomycotina</taxon>
        <taxon>Eurotiomycetes</taxon>
        <taxon>Eurotiomycetidae</taxon>
        <taxon>Eurotiales</taxon>
        <taxon>Aspergillaceae</taxon>
        <taxon>Aspergillus</taxon>
        <taxon>Aspergillus subgen. Circumdati</taxon>
    </lineage>
</organism>
<comment type="function">
    <text evidence="1 4 7">Hydrolase; part of the gene cluster that mediates the biosynthesis of the cytotoxic leucine-containing cytochalasans, including aspochalasin C, aspochalasin E, TMC-169, flavichalasine F, aspergillin PZ, aspochalasin M and flavichalasine G (PubMed:32913332). The first step in the pathway is catalyzed by the hybrid PKS-NRPS ffsA that utilizes 8 units of malonyl-CoA to iteratively assemble the octaketide chain before addition of L-leucine by the C-terminal NRPS modules (PubMed:32913332). Because ffsA lacks a designated enoylreductase (ER) domain, the required activity is provided the enoyl reductase fssC (Probable). The methyltransferase (MT) domain of ffsA catalyzes the alpha-methylation at C10 and C14 using S-adenosyl-L-methionine as the methyl-donating cosubstrate (Probable). Reduction by the hydrolyase ffsE, followed by dehydration and intra-molecular Diels-Alder cyclization by the Diels-Alderase ffsF then yield the required isoindolone-fused macrocycle (By similarity). A number of oxidative steps catalyzed by the tailoring cytochrome P450 monooxygenase ffsD, the FAD-linked oxidoreductase ffsJ and the short-chain dehydrogenase/reductase ffsI, are further required to afford the final products (Probable).</text>
</comment>
<comment type="pathway">
    <text evidence="7">Mycotoxin biosynthesis.</text>
</comment>
<comment type="subunit">
    <text evidence="3">Homodimer.</text>
</comment>
<comment type="similarity">
    <text evidence="6">Belongs to the AB hydrolase superfamily. FUS2 hydrolase family.</text>
</comment>
<name>FFSE_ASPFV</name>
<proteinExistence type="inferred from homology"/>
<gene>
    <name evidence="5" type="primary">ffsE</name>
</gene>
<keyword id="KW-0378">Hydrolase</keyword>